<comment type="function">
    <text evidence="1">Component of specific cytoplasmic RNA granules involved in post-transcriptional regulation of specific genes: probably acts by binding to specific mRNAs and regulating their translation. Required for lens transparency during lens development, by regulating translation of genes such as CRYBB3 and HSPB1 in the developing lens. Also required during spermatogenesis (By similarity).</text>
</comment>
<comment type="subunit">
    <text evidence="1">Found in a mRNP complex, at least composed of TDRD1, TDRD6, TDRD7 and DDX4. Found in a complex containing CABLES1, CDK16 and CDK17. Interacts with CABLES1, CDK17 and PIWIL1 (By similarity).</text>
</comment>
<comment type="subcellular location">
    <subcellularLocation>
        <location evidence="1">Cytoplasm</location>
    </subcellularLocation>
    <text evidence="1">Localizes to cytoplasmic RNA granules (By similarity). Present in chromatoid body (CB) of spermatids (mammalian counterpart of germplasm, pole plasm or polar granules in Drosophila germ cells), also named processing bodies (P-bodies) in somatic cells. Detected in the multilobular cytoplasmic CBs (also called intermitochondrial cementin) in pachytene spermatocytes and as a single perinuclear CB in haploid round spermatids (By similarity).</text>
</comment>
<comment type="similarity">
    <text evidence="6">Belongs to the TDRD7 family.</text>
</comment>
<accession>A6QLE1</accession>
<keyword id="KW-0963">Cytoplasm</keyword>
<keyword id="KW-0221">Differentiation</keyword>
<keyword id="KW-0597">Phosphoprotein</keyword>
<keyword id="KW-1185">Reference proteome</keyword>
<keyword id="KW-0677">Repeat</keyword>
<keyword id="KW-0694">RNA-binding</keyword>
<keyword id="KW-0744">Spermatogenesis</keyword>
<reference key="1">
    <citation type="submission" date="2007-06" db="EMBL/GenBank/DDBJ databases">
        <authorList>
            <consortium name="NIH - Mammalian Gene Collection (MGC) project"/>
        </authorList>
    </citation>
    <scope>NUCLEOTIDE SEQUENCE [LARGE SCALE MRNA]</scope>
    <source>
        <strain>Hereford</strain>
        <tissue>Hippocampus</tissue>
    </source>
</reference>
<name>TDRD7_BOVIN</name>
<evidence type="ECO:0000250" key="1"/>
<evidence type="ECO:0000250" key="2">
    <source>
        <dbReference type="UniProtKB" id="Q8K1H1"/>
    </source>
</evidence>
<evidence type="ECO:0000250" key="3">
    <source>
        <dbReference type="UniProtKB" id="Q8NHU6"/>
    </source>
</evidence>
<evidence type="ECO:0000255" key="4">
    <source>
        <dbReference type="PROSITE-ProRule" id="PRU00211"/>
    </source>
</evidence>
<evidence type="ECO:0000255" key="5">
    <source>
        <dbReference type="PROSITE-ProRule" id="PRU00975"/>
    </source>
</evidence>
<evidence type="ECO:0000305" key="6"/>
<organism>
    <name type="scientific">Bos taurus</name>
    <name type="common">Bovine</name>
    <dbReference type="NCBI Taxonomy" id="9913"/>
    <lineage>
        <taxon>Eukaryota</taxon>
        <taxon>Metazoa</taxon>
        <taxon>Chordata</taxon>
        <taxon>Craniata</taxon>
        <taxon>Vertebrata</taxon>
        <taxon>Euteleostomi</taxon>
        <taxon>Mammalia</taxon>
        <taxon>Eutheria</taxon>
        <taxon>Laurasiatheria</taxon>
        <taxon>Artiodactyla</taxon>
        <taxon>Ruminantia</taxon>
        <taxon>Pecora</taxon>
        <taxon>Bovidae</taxon>
        <taxon>Bovinae</taxon>
        <taxon>Bos</taxon>
    </lineage>
</organism>
<protein>
    <recommendedName>
        <fullName>Tudor domain-containing protein 7</fullName>
    </recommendedName>
</protein>
<sequence length="1098" mass="123899">MLEADLVSKMLRAVLQSHKNGIALPRLQGEYRSLTGDWIPFKQLGYPTLEAYLRSVPAVVRIETSRSGEVTCYAVACTETARIAQLVARQRSSKRKTGRQVNCQMRVKKTMPFFLEGKPKATLRQPGFSSDFSVSKKPNSTLLRNKGISLGVKSDAEVLPYTLQTTIGNEVFKDVPVQSHMTMSTNNRFSPKASLPPRFQMHLSRTCTKEMSDNLNQAVEKPNVTPPASYTYKMDEVQNRIKEILNKHSNGIWISKLPHFYKELYKEELNQGILQQFEHWPHICTVEKPCSGGQDLLLYPAKRKQLLRSELNTEKVPPSPLPAPKQIPPLKGCPAVMPGDFKEKVAELLVKYSSGLWASALPKTFEDMYKVKLPEDALKNLDLLSDVCTVDYISGNPQKAILYAKLPSPADKILKDAEQAHGNYDIKSTVEQEYLQIEENIAESTDTFMETVTIPPLIIPTETSPSVLVVELSNTNEVVIRYVGKDYSAAQELMEDEMKEYYSKNSKVTPVQTVQIGQLLAVNAEEDAWLRAQVISMEEGKIKVCYVDYGFSENVEKSKAYRLNPKFCSLSFQATKCKLAGLEVLSDDPDLVKVVESLTCGKIFAVEILEKTDIPLVVLYDTSGEDDININATCLKAICDKSLEVHLQVDAMYTNVRVTNICSDGTLYCQVPCKGLNKLNDLLHKIEEYFHCKHMTSEYFVSLPFCGKVCLFHCKGKWLRVEITNVHSSRALDVQFLDAGTVTSVKVSELREIPPRFLQEMISVPPQAIKCCLADLPQSIGMWTPDAVLWLRDSVLNCSDCSIKVTKVDETRGIAHIYLFTPKNFPDPHRSINRQITNADLWKHQKDVFLSAISSGASSPNTKSANTPILGNTGETFRKSLTDVLKKSVVNHPSSFFTKELPPPVHLSKPGEHMDVYVPVACHPGYFVIQPWQEIHKLEVLMEEMILYYSVSEERHVAVEKDQVYAAKVENKWHRVLLKGILTNGLVSVYELDYGKHELVNMRKVQPLADMFRKLPFQAVTAQLAGVKCNQWSEEASMVFRNHVEKKPLVALVQTVIENTNPWDRKVVVYLVDTSLPDTDIWIHDFMSEYLVELSKVN</sequence>
<gene>
    <name type="primary">TDRD7</name>
</gene>
<feature type="chain" id="PRO_0000409516" description="Tudor domain-containing protein 7">
    <location>
        <begin position="1"/>
        <end position="1098"/>
    </location>
</feature>
<feature type="domain" description="HTH OST-type 1" evidence="5">
    <location>
        <begin position="3"/>
        <end position="76"/>
    </location>
</feature>
<feature type="domain" description="HTH OST-type 2" evidence="5">
    <location>
        <begin position="233"/>
        <end position="302"/>
    </location>
</feature>
<feature type="domain" description="HTH OST-type 3" evidence="5">
    <location>
        <begin position="337"/>
        <end position="406"/>
    </location>
</feature>
<feature type="domain" description="Tudor 1" evidence="4">
    <location>
        <begin position="513"/>
        <end position="570"/>
    </location>
</feature>
<feature type="domain" description="Tudor 2" evidence="4">
    <location>
        <begin position="703"/>
        <end position="760"/>
    </location>
</feature>
<feature type="region of interest" description="Interaction with CDK17" evidence="1">
    <location>
        <begin position="861"/>
        <end position="1098"/>
    </location>
</feature>
<feature type="region of interest" description="Interaction with CABLES1" evidence="1">
    <location>
        <begin position="893"/>
        <end position="1098"/>
    </location>
</feature>
<feature type="modified residue" description="Phosphoserine" evidence="3">
    <location>
        <position position="319"/>
    </location>
</feature>
<feature type="modified residue" description="Phosphoserine" evidence="2">
    <location>
        <position position="859"/>
    </location>
</feature>
<proteinExistence type="evidence at transcript level"/>
<dbReference type="EMBL" id="BC147932">
    <property type="protein sequence ID" value="AAI47933.1"/>
    <property type="molecule type" value="mRNA"/>
</dbReference>
<dbReference type="RefSeq" id="NP_001093779.1">
    <property type="nucleotide sequence ID" value="NM_001100309.1"/>
</dbReference>
<dbReference type="RefSeq" id="XP_015328029.1">
    <property type="nucleotide sequence ID" value="XM_015472543.3"/>
</dbReference>
<dbReference type="SMR" id="A6QLE1"/>
<dbReference type="FunCoup" id="A6QLE1">
    <property type="interactions" value="1122"/>
</dbReference>
<dbReference type="STRING" id="9913.ENSBTAP00000004845"/>
<dbReference type="PaxDb" id="9913-ENSBTAP00000004845"/>
<dbReference type="Ensembl" id="ENSBTAT00000004845.7">
    <property type="protein sequence ID" value="ENSBTAP00000004845.5"/>
    <property type="gene ID" value="ENSBTAG00000003719.7"/>
</dbReference>
<dbReference type="GeneID" id="506702"/>
<dbReference type="KEGG" id="bta:506702"/>
<dbReference type="CTD" id="23424"/>
<dbReference type="VEuPathDB" id="HostDB:ENSBTAG00000003719"/>
<dbReference type="VGNC" id="VGNC:35721">
    <property type="gene designation" value="TDRD7"/>
</dbReference>
<dbReference type="eggNOG" id="KOG2039">
    <property type="taxonomic scope" value="Eukaryota"/>
</dbReference>
<dbReference type="GeneTree" id="ENSGT00890000139482"/>
<dbReference type="HOGENOM" id="CLU_283554_0_0_1"/>
<dbReference type="InParanoid" id="A6QLE1"/>
<dbReference type="OMA" id="DIPMQRH"/>
<dbReference type="OrthoDB" id="10034606at2759"/>
<dbReference type="Proteomes" id="UP000009136">
    <property type="component" value="Chromosome 8"/>
</dbReference>
<dbReference type="Bgee" id="ENSBTAG00000003719">
    <property type="expression patterns" value="Expressed in spermatid and 108 other cell types or tissues"/>
</dbReference>
<dbReference type="GO" id="GO:0043186">
    <property type="term" value="C:P granule"/>
    <property type="evidence" value="ECO:0000318"/>
    <property type="project" value="GO_Central"/>
</dbReference>
<dbReference type="GO" id="GO:0035770">
    <property type="term" value="C:ribonucleoprotein granule"/>
    <property type="evidence" value="ECO:0000250"/>
    <property type="project" value="UniProtKB"/>
</dbReference>
<dbReference type="GO" id="GO:0003729">
    <property type="term" value="F:mRNA binding"/>
    <property type="evidence" value="ECO:0000250"/>
    <property type="project" value="UniProtKB"/>
</dbReference>
<dbReference type="GO" id="GO:0070306">
    <property type="term" value="P:lens fiber cell differentiation"/>
    <property type="evidence" value="ECO:0000250"/>
    <property type="project" value="UniProtKB"/>
</dbReference>
<dbReference type="GO" id="GO:0002089">
    <property type="term" value="P:lens morphogenesis in camera-type eye"/>
    <property type="evidence" value="ECO:0000250"/>
    <property type="project" value="UniProtKB"/>
</dbReference>
<dbReference type="GO" id="GO:0030719">
    <property type="term" value="P:P granule organization"/>
    <property type="evidence" value="ECO:0000318"/>
    <property type="project" value="GO_Central"/>
</dbReference>
<dbReference type="GO" id="GO:0034587">
    <property type="term" value="P:piRNA processing"/>
    <property type="evidence" value="ECO:0000318"/>
    <property type="project" value="GO_Central"/>
</dbReference>
<dbReference type="GO" id="GO:0010608">
    <property type="term" value="P:post-transcriptional regulation of gene expression"/>
    <property type="evidence" value="ECO:0000250"/>
    <property type="project" value="UniProtKB"/>
</dbReference>
<dbReference type="GO" id="GO:0007283">
    <property type="term" value="P:spermatogenesis"/>
    <property type="evidence" value="ECO:0000250"/>
    <property type="project" value="UniProtKB"/>
</dbReference>
<dbReference type="CDD" id="cd09986">
    <property type="entry name" value="LOTUS_1_TDRD7"/>
    <property type="match status" value="1"/>
</dbReference>
<dbReference type="CDD" id="cd09973">
    <property type="entry name" value="LOTUS_2_TDRD7"/>
    <property type="match status" value="1"/>
</dbReference>
<dbReference type="CDD" id="cd09974">
    <property type="entry name" value="LOTUS_3_TDRD7"/>
    <property type="match status" value="1"/>
</dbReference>
<dbReference type="CDD" id="cd20427">
    <property type="entry name" value="Tudor_TDRD7_rpt1"/>
    <property type="match status" value="1"/>
</dbReference>
<dbReference type="CDD" id="cd20428">
    <property type="entry name" value="Tudor_TDRD7_rpt2"/>
    <property type="match status" value="1"/>
</dbReference>
<dbReference type="CDD" id="cd20429">
    <property type="entry name" value="Tudor_TDRD7_rpt3"/>
    <property type="match status" value="1"/>
</dbReference>
<dbReference type="FunFam" id="2.40.50.90:FF:000006">
    <property type="entry name" value="Tudor domain-containing protein 7"/>
    <property type="match status" value="1"/>
</dbReference>
<dbReference type="FunFam" id="3.30.420.610:FF:000008">
    <property type="entry name" value="Tudor domain-containing protein 7"/>
    <property type="match status" value="1"/>
</dbReference>
<dbReference type="FunFam" id="2.30.30.140:FF:000065">
    <property type="entry name" value="tudor domain-containing protein 7"/>
    <property type="match status" value="1"/>
</dbReference>
<dbReference type="FunFam" id="2.30.30.140:FF:000045">
    <property type="entry name" value="tudor domain-containing protein 7 isoform X1"/>
    <property type="match status" value="1"/>
</dbReference>
<dbReference type="FunFam" id="3.30.420.610:FF:000009">
    <property type="entry name" value="Tudor domain-containing protein 7 isoform X2"/>
    <property type="match status" value="1"/>
</dbReference>
<dbReference type="FunFam" id="2.30.30.140:FF:000053">
    <property type="entry name" value="tudor domain-containing protein 7 isoform X2"/>
    <property type="match status" value="1"/>
</dbReference>
<dbReference type="FunFam" id="3.30.420.610:FF:000006">
    <property type="entry name" value="tudor domain-containing protein 7 isoform X2"/>
    <property type="match status" value="1"/>
</dbReference>
<dbReference type="Gene3D" id="2.30.30.140">
    <property type="match status" value="3"/>
</dbReference>
<dbReference type="Gene3D" id="2.40.50.90">
    <property type="match status" value="3"/>
</dbReference>
<dbReference type="Gene3D" id="3.30.420.610">
    <property type="entry name" value="LOTUS domain-like"/>
    <property type="match status" value="3"/>
</dbReference>
<dbReference type="InterPro" id="IPR041966">
    <property type="entry name" value="LOTUS-like"/>
</dbReference>
<dbReference type="InterPro" id="IPR025605">
    <property type="entry name" value="OST-HTH/LOTUS_dom"/>
</dbReference>
<dbReference type="InterPro" id="IPR035437">
    <property type="entry name" value="SNase_OB-fold_sf"/>
</dbReference>
<dbReference type="InterPro" id="IPR037978">
    <property type="entry name" value="TDRD7_LOTUS_3"/>
</dbReference>
<dbReference type="InterPro" id="IPR002999">
    <property type="entry name" value="Tudor"/>
</dbReference>
<dbReference type="InterPro" id="IPR050621">
    <property type="entry name" value="Tudor_domain_containing"/>
</dbReference>
<dbReference type="InterPro" id="IPR047448">
    <property type="entry name" value="Tudor_TDRD7_rpt2"/>
</dbReference>
<dbReference type="InterPro" id="IPR047449">
    <property type="entry name" value="Tudor_TDRD7_rpt3"/>
</dbReference>
<dbReference type="PANTHER" id="PTHR22948">
    <property type="entry name" value="TUDOR DOMAIN CONTAINING PROTEIN"/>
    <property type="match status" value="1"/>
</dbReference>
<dbReference type="PANTHER" id="PTHR22948:SF14">
    <property type="entry name" value="TUDOR DOMAIN-CONTAINING PROTEIN 7"/>
    <property type="match status" value="1"/>
</dbReference>
<dbReference type="Pfam" id="PF12872">
    <property type="entry name" value="OST-HTH"/>
    <property type="match status" value="2"/>
</dbReference>
<dbReference type="Pfam" id="PF00567">
    <property type="entry name" value="TUDOR"/>
    <property type="match status" value="3"/>
</dbReference>
<dbReference type="SMART" id="SM00333">
    <property type="entry name" value="TUDOR"/>
    <property type="match status" value="3"/>
</dbReference>
<dbReference type="SUPFAM" id="SSF63748">
    <property type="entry name" value="Tudor/PWWP/MBT"/>
    <property type="match status" value="3"/>
</dbReference>
<dbReference type="PROSITE" id="PS51644">
    <property type="entry name" value="HTH_OST"/>
    <property type="match status" value="3"/>
</dbReference>
<dbReference type="PROSITE" id="PS50304">
    <property type="entry name" value="TUDOR"/>
    <property type="match status" value="2"/>
</dbReference>